<reference key="1">
    <citation type="journal article" date="2008" name="Genome Res.">
        <title>Chlamydia trachomatis: genome sequence analysis of lymphogranuloma venereum isolates.</title>
        <authorList>
            <person name="Thomson N.R."/>
            <person name="Holden M.T.G."/>
            <person name="Carder C."/>
            <person name="Lennard N."/>
            <person name="Lockey S.J."/>
            <person name="Marsh P."/>
            <person name="Skipp P."/>
            <person name="O'Connor C.D."/>
            <person name="Goodhead I."/>
            <person name="Norbertzcak H."/>
            <person name="Harris B."/>
            <person name="Ormond D."/>
            <person name="Rance R."/>
            <person name="Quail M.A."/>
            <person name="Parkhill J."/>
            <person name="Stephens R.S."/>
            <person name="Clarke I.N."/>
        </authorList>
    </citation>
    <scope>NUCLEOTIDE SEQUENCE [LARGE SCALE GENOMIC DNA]</scope>
    <source>
        <strain>UCH-1/proctitis</strain>
    </source>
</reference>
<dbReference type="EC" id="1.5.1.5" evidence="1"/>
<dbReference type="EC" id="3.5.4.9" evidence="1"/>
<dbReference type="EMBL" id="AM884177">
    <property type="protein sequence ID" value="CAP06727.1"/>
    <property type="molecule type" value="Genomic_DNA"/>
</dbReference>
<dbReference type="RefSeq" id="WP_009871427.1">
    <property type="nucleotide sequence ID" value="NC_010280.2"/>
</dbReference>
<dbReference type="SMR" id="B0BB65"/>
<dbReference type="KEGG" id="ctl:CTLon_0329"/>
<dbReference type="HOGENOM" id="CLU_034045_2_0_0"/>
<dbReference type="UniPathway" id="UPA00193"/>
<dbReference type="Proteomes" id="UP001154401">
    <property type="component" value="Chromosome"/>
</dbReference>
<dbReference type="GO" id="GO:0005829">
    <property type="term" value="C:cytosol"/>
    <property type="evidence" value="ECO:0007669"/>
    <property type="project" value="TreeGrafter"/>
</dbReference>
<dbReference type="GO" id="GO:0004477">
    <property type="term" value="F:methenyltetrahydrofolate cyclohydrolase activity"/>
    <property type="evidence" value="ECO:0007669"/>
    <property type="project" value="UniProtKB-UniRule"/>
</dbReference>
<dbReference type="GO" id="GO:0004488">
    <property type="term" value="F:methylenetetrahydrofolate dehydrogenase (NADP+) activity"/>
    <property type="evidence" value="ECO:0007669"/>
    <property type="project" value="UniProtKB-UniRule"/>
</dbReference>
<dbReference type="GO" id="GO:0000105">
    <property type="term" value="P:L-histidine biosynthetic process"/>
    <property type="evidence" value="ECO:0007669"/>
    <property type="project" value="UniProtKB-KW"/>
</dbReference>
<dbReference type="GO" id="GO:0009086">
    <property type="term" value="P:methionine biosynthetic process"/>
    <property type="evidence" value="ECO:0007669"/>
    <property type="project" value="UniProtKB-KW"/>
</dbReference>
<dbReference type="GO" id="GO:0006164">
    <property type="term" value="P:purine nucleotide biosynthetic process"/>
    <property type="evidence" value="ECO:0007669"/>
    <property type="project" value="UniProtKB-KW"/>
</dbReference>
<dbReference type="GO" id="GO:0035999">
    <property type="term" value="P:tetrahydrofolate interconversion"/>
    <property type="evidence" value="ECO:0007669"/>
    <property type="project" value="UniProtKB-UniRule"/>
</dbReference>
<dbReference type="CDD" id="cd01080">
    <property type="entry name" value="NAD_bind_m-THF_DH_Cyclohyd"/>
    <property type="match status" value="1"/>
</dbReference>
<dbReference type="FunFam" id="3.40.50.720:FF:000094">
    <property type="entry name" value="Bifunctional protein FolD"/>
    <property type="match status" value="1"/>
</dbReference>
<dbReference type="FunFam" id="3.40.50.10860:FF:000005">
    <property type="entry name" value="C-1-tetrahydrofolate synthase, cytoplasmic, putative"/>
    <property type="match status" value="1"/>
</dbReference>
<dbReference type="Gene3D" id="3.40.50.10860">
    <property type="entry name" value="Leucine Dehydrogenase, chain A, domain 1"/>
    <property type="match status" value="1"/>
</dbReference>
<dbReference type="Gene3D" id="3.40.50.720">
    <property type="entry name" value="NAD(P)-binding Rossmann-like Domain"/>
    <property type="match status" value="1"/>
</dbReference>
<dbReference type="HAMAP" id="MF_01576">
    <property type="entry name" value="THF_DHG_CYH"/>
    <property type="match status" value="1"/>
</dbReference>
<dbReference type="InterPro" id="IPR046346">
    <property type="entry name" value="Aminoacid_DH-like_N_sf"/>
</dbReference>
<dbReference type="InterPro" id="IPR036291">
    <property type="entry name" value="NAD(P)-bd_dom_sf"/>
</dbReference>
<dbReference type="InterPro" id="IPR000672">
    <property type="entry name" value="THF_DH/CycHdrlase"/>
</dbReference>
<dbReference type="InterPro" id="IPR020630">
    <property type="entry name" value="THF_DH/CycHdrlase_cat_dom"/>
</dbReference>
<dbReference type="InterPro" id="IPR020867">
    <property type="entry name" value="THF_DH/CycHdrlase_CS"/>
</dbReference>
<dbReference type="InterPro" id="IPR020631">
    <property type="entry name" value="THF_DH/CycHdrlase_NAD-bd_dom"/>
</dbReference>
<dbReference type="NCBIfam" id="NF010778">
    <property type="entry name" value="PRK14181.1"/>
    <property type="match status" value="1"/>
</dbReference>
<dbReference type="PANTHER" id="PTHR48099:SF5">
    <property type="entry name" value="C-1-TETRAHYDROFOLATE SYNTHASE, CYTOPLASMIC"/>
    <property type="match status" value="1"/>
</dbReference>
<dbReference type="PANTHER" id="PTHR48099">
    <property type="entry name" value="C-1-TETRAHYDROFOLATE SYNTHASE, CYTOPLASMIC-RELATED"/>
    <property type="match status" value="1"/>
</dbReference>
<dbReference type="Pfam" id="PF00763">
    <property type="entry name" value="THF_DHG_CYH"/>
    <property type="match status" value="1"/>
</dbReference>
<dbReference type="Pfam" id="PF02882">
    <property type="entry name" value="THF_DHG_CYH_C"/>
    <property type="match status" value="1"/>
</dbReference>
<dbReference type="PRINTS" id="PR00085">
    <property type="entry name" value="THFDHDRGNASE"/>
</dbReference>
<dbReference type="SUPFAM" id="SSF53223">
    <property type="entry name" value="Aminoacid dehydrogenase-like, N-terminal domain"/>
    <property type="match status" value="1"/>
</dbReference>
<dbReference type="SUPFAM" id="SSF51735">
    <property type="entry name" value="NAD(P)-binding Rossmann-fold domains"/>
    <property type="match status" value="1"/>
</dbReference>
<dbReference type="PROSITE" id="PS00766">
    <property type="entry name" value="THF_DHG_CYH_1"/>
    <property type="match status" value="1"/>
</dbReference>
<dbReference type="PROSITE" id="PS00767">
    <property type="entry name" value="THF_DHG_CYH_2"/>
    <property type="match status" value="1"/>
</dbReference>
<feature type="chain" id="PRO_1000215590" description="Bifunctional protein FolD">
    <location>
        <begin position="1"/>
        <end position="287"/>
    </location>
</feature>
<feature type="binding site" evidence="1">
    <location>
        <begin position="160"/>
        <end position="162"/>
    </location>
    <ligand>
        <name>NADP(+)</name>
        <dbReference type="ChEBI" id="CHEBI:58349"/>
    </ligand>
</feature>
<feature type="binding site" evidence="1">
    <location>
        <position position="189"/>
    </location>
    <ligand>
        <name>NADP(+)</name>
        <dbReference type="ChEBI" id="CHEBI:58349"/>
    </ligand>
</feature>
<feature type="binding site" evidence="1">
    <location>
        <position position="230"/>
    </location>
    <ligand>
        <name>NADP(+)</name>
        <dbReference type="ChEBI" id="CHEBI:58349"/>
    </ligand>
</feature>
<keyword id="KW-0028">Amino-acid biosynthesis</keyword>
<keyword id="KW-0368">Histidine biosynthesis</keyword>
<keyword id="KW-0378">Hydrolase</keyword>
<keyword id="KW-0486">Methionine biosynthesis</keyword>
<keyword id="KW-0511">Multifunctional enzyme</keyword>
<keyword id="KW-0521">NADP</keyword>
<keyword id="KW-0554">One-carbon metabolism</keyword>
<keyword id="KW-0560">Oxidoreductase</keyword>
<keyword id="KW-0658">Purine biosynthesis</keyword>
<comment type="function">
    <text evidence="1">Catalyzes the oxidation of 5,10-methylenetetrahydrofolate to 5,10-methenyltetrahydrofolate and then the hydrolysis of 5,10-methenyltetrahydrofolate to 10-formyltetrahydrofolate.</text>
</comment>
<comment type="catalytic activity">
    <reaction evidence="1">
        <text>(6R)-5,10-methylene-5,6,7,8-tetrahydrofolate + NADP(+) = (6R)-5,10-methenyltetrahydrofolate + NADPH</text>
        <dbReference type="Rhea" id="RHEA:22812"/>
        <dbReference type="ChEBI" id="CHEBI:15636"/>
        <dbReference type="ChEBI" id="CHEBI:57455"/>
        <dbReference type="ChEBI" id="CHEBI:57783"/>
        <dbReference type="ChEBI" id="CHEBI:58349"/>
        <dbReference type="EC" id="1.5.1.5"/>
    </reaction>
</comment>
<comment type="catalytic activity">
    <reaction evidence="1">
        <text>(6R)-5,10-methenyltetrahydrofolate + H2O = (6R)-10-formyltetrahydrofolate + H(+)</text>
        <dbReference type="Rhea" id="RHEA:23700"/>
        <dbReference type="ChEBI" id="CHEBI:15377"/>
        <dbReference type="ChEBI" id="CHEBI:15378"/>
        <dbReference type="ChEBI" id="CHEBI:57455"/>
        <dbReference type="ChEBI" id="CHEBI:195366"/>
        <dbReference type="EC" id="3.5.4.9"/>
    </reaction>
</comment>
<comment type="pathway">
    <text evidence="1">One-carbon metabolism; tetrahydrofolate interconversion.</text>
</comment>
<comment type="subunit">
    <text evidence="1">Homodimer.</text>
</comment>
<comment type="similarity">
    <text evidence="1">Belongs to the tetrahydrofolate dehydrogenase/cyclohydrolase family.</text>
</comment>
<gene>
    <name evidence="1" type="primary">folD</name>
    <name type="ordered locus">CTLon_0329</name>
</gene>
<organism>
    <name type="scientific">Chlamydia trachomatis serovar L2b (strain UCH-1/proctitis)</name>
    <dbReference type="NCBI Taxonomy" id="471473"/>
    <lineage>
        <taxon>Bacteria</taxon>
        <taxon>Pseudomonadati</taxon>
        <taxon>Chlamydiota</taxon>
        <taxon>Chlamydiia</taxon>
        <taxon>Chlamydiales</taxon>
        <taxon>Chlamydiaceae</taxon>
        <taxon>Chlamydia/Chlamydophila group</taxon>
        <taxon>Chlamydia</taxon>
    </lineage>
</organism>
<accession>B0BB65</accession>
<name>FOLD_CHLTB</name>
<sequence length="287" mass="30866">MLLKGAPAADHILATIKENIRACSKAPGLAVVLIGNNPASEIYVNMKIKRATDLGMVSKSYRKPSDATLSDILALIHQLNNDENIHGILVQLPLPKHLDAQAILSTITPDKDVDGLHPVNVGKLLLGETDGFIPCTPAGIVELCKYYEIPLHGKHVVILGRSNIVGKPLAALLMQRHADTNASVTLLHSQSEHLTEITRTADILISAIGVPLFVNKEMIAEKTVIMDVGTSRIPAANPKGYILVGDVDFNNVVPVCRAITPVPGGVGPMTVAMLMRNTWESFLRHTS</sequence>
<evidence type="ECO:0000255" key="1">
    <source>
        <dbReference type="HAMAP-Rule" id="MF_01576"/>
    </source>
</evidence>
<proteinExistence type="inferred from homology"/>
<protein>
    <recommendedName>
        <fullName evidence="1">Bifunctional protein FolD</fullName>
    </recommendedName>
    <domain>
        <recommendedName>
            <fullName evidence="1">Methylenetetrahydrofolate dehydrogenase</fullName>
            <ecNumber evidence="1">1.5.1.5</ecNumber>
        </recommendedName>
    </domain>
    <domain>
        <recommendedName>
            <fullName evidence="1">Methenyltetrahydrofolate cyclohydrolase</fullName>
            <ecNumber evidence="1">3.5.4.9</ecNumber>
        </recommendedName>
    </domain>
</protein>